<gene>
    <name type="primary">teaA</name>
    <name type="ordered locus">HELO_4274</name>
</gene>
<comment type="function">
    <text evidence="1 2 3">Part of the tripartite ATP-independent periplasmic (TRAP) transport system TeaABC involved in the uptake of ectoine and hydroxyectoine in response to osmotic upshock. Probably functions as a recovery system for synthesized ectoine that leaks out of the cell. Binds ectoine with high affinity. Affinity for hydroxyectoine is approximately 20-fold lower.</text>
</comment>
<comment type="subunit">
    <text evidence="1 3">Monomer. The complex comprises the extracytoplasmic solute receptor protein TeaA, and the two transmembrane proteins TeaB and TeaC.</text>
</comment>
<comment type="subcellular location">
    <subcellularLocation>
        <location evidence="2">Periplasm</location>
    </subcellularLocation>
</comment>
<comment type="disruption phenotype">
    <text evidence="1">Deletion abolishes accumulation of ectoine from the medium.</text>
</comment>
<comment type="miscellaneous">
    <text evidence="6 7">The ectoine/TeaA complex displays a closed conformation (PubMed:18702523). Interaction with the transmembrane proteins induces opening of TeaA, which facilitates substrate release (PubMed:22084072).</text>
</comment>
<comment type="similarity">
    <text evidence="5">Belongs to the bacterial solute-binding protein 7 family.</text>
</comment>
<name>TEAA_HALED</name>
<proteinExistence type="evidence at protein level"/>
<keyword id="KW-0002">3D-structure</keyword>
<keyword id="KW-0903">Direct protein sequencing</keyword>
<keyword id="KW-0574">Periplasm</keyword>
<keyword id="KW-0732">Signal</keyword>
<keyword id="KW-0813">Transport</keyword>
<protein>
    <recommendedName>
        <fullName>Ectoine-binding periplasmic protein TeaA</fullName>
    </recommendedName>
</protein>
<organism>
    <name type="scientific">Halomonas elongata (strain ATCC 33173 / DSM 2581 / NBRC 15536 / NCIMB 2198 / 1H9)</name>
    <dbReference type="NCBI Taxonomy" id="768066"/>
    <lineage>
        <taxon>Bacteria</taxon>
        <taxon>Pseudomonadati</taxon>
        <taxon>Pseudomonadota</taxon>
        <taxon>Gammaproteobacteria</taxon>
        <taxon>Oceanospirillales</taxon>
        <taxon>Halomonadaceae</taxon>
        <taxon>Halomonas</taxon>
    </lineage>
</organism>
<feature type="signal peptide" evidence="2">
    <location>
        <begin position="1"/>
        <end position="25"/>
    </location>
</feature>
<feature type="chain" id="PRO_0000428828" description="Ectoine-binding periplasmic protein TeaA">
    <location>
        <begin position="26"/>
        <end position="341"/>
    </location>
</feature>
<feature type="binding site">
    <location>
        <position position="34"/>
    </location>
    <ligand>
        <name>L-ectoine</name>
        <dbReference type="ChEBI" id="CHEBI:58515"/>
    </ligand>
</feature>
<feature type="binding site">
    <location>
        <position position="169"/>
    </location>
    <ligand>
        <name>L-ectoine</name>
        <dbReference type="ChEBI" id="CHEBI:58515"/>
    </ligand>
</feature>
<feature type="binding site">
    <location>
        <position position="209"/>
    </location>
    <ligand>
        <name>L-ectoine</name>
        <dbReference type="ChEBI" id="CHEBI:58515"/>
    </ligand>
</feature>
<feature type="binding site">
    <location>
        <position position="213"/>
    </location>
    <ligand>
        <name>L-ectoine</name>
        <dbReference type="ChEBI" id="CHEBI:58515"/>
    </ligand>
</feature>
<feature type="binding site">
    <location>
        <position position="234"/>
    </location>
    <ligand>
        <name>L-ectoine</name>
        <dbReference type="ChEBI" id="CHEBI:58515"/>
    </ligand>
</feature>
<feature type="mutagenesis site" description="Strongly biased toward the open conformation. Has lower affinity for ectoine. Does not affect the structure of the substrate-binding site." evidence="4">
    <original>GLS</original>
    <variation>AAA</variation>
    <location>
        <begin position="273"/>
        <end position="275"/>
    </location>
</feature>
<feature type="mutagenesis site" description="Conformationally unbiased. Has wild-type affinity for ectoine." evidence="4">
    <original>G</original>
    <variation>P</variation>
    <location>
        <position position="273"/>
    </location>
</feature>
<feature type="strand" evidence="8">
    <location>
        <begin position="27"/>
        <end position="31"/>
    </location>
</feature>
<feature type="helix" evidence="8">
    <location>
        <begin position="39"/>
        <end position="53"/>
    </location>
</feature>
<feature type="strand" evidence="8">
    <location>
        <begin position="54"/>
        <end position="56"/>
    </location>
</feature>
<feature type="strand" evidence="8">
    <location>
        <begin position="58"/>
        <end position="62"/>
    </location>
</feature>
<feature type="turn" evidence="9">
    <location>
        <begin position="64"/>
        <end position="67"/>
    </location>
</feature>
<feature type="helix" evidence="8">
    <location>
        <begin position="73"/>
        <end position="78"/>
    </location>
</feature>
<feature type="strand" evidence="8">
    <location>
        <begin position="83"/>
        <end position="87"/>
    </location>
</feature>
<feature type="helix" evidence="8">
    <location>
        <begin position="89"/>
        <end position="92"/>
    </location>
</feature>
<feature type="turn" evidence="8">
    <location>
        <begin position="93"/>
        <end position="95"/>
    </location>
</feature>
<feature type="helix" evidence="8">
    <location>
        <begin position="97"/>
        <end position="103"/>
    </location>
</feature>
<feature type="helix" evidence="8">
    <location>
        <begin position="112"/>
        <end position="121"/>
    </location>
</feature>
<feature type="helix" evidence="8">
    <location>
        <begin position="123"/>
        <end position="126"/>
    </location>
</feature>
<feature type="helix" evidence="8">
    <location>
        <begin position="128"/>
        <end position="134"/>
    </location>
</feature>
<feature type="turn" evidence="8">
    <location>
        <begin position="135"/>
        <end position="137"/>
    </location>
</feature>
<feature type="strand" evidence="8">
    <location>
        <begin position="138"/>
        <end position="155"/>
    </location>
</feature>
<feature type="helix" evidence="8">
    <location>
        <begin position="160"/>
        <end position="163"/>
    </location>
</feature>
<feature type="strand" evidence="8">
    <location>
        <begin position="167"/>
        <end position="170"/>
    </location>
</feature>
<feature type="helix" evidence="8">
    <location>
        <begin position="174"/>
        <end position="183"/>
    </location>
</feature>
<feature type="strand" evidence="8">
    <location>
        <begin position="186"/>
        <end position="189"/>
    </location>
</feature>
<feature type="helix" evidence="8">
    <location>
        <begin position="192"/>
        <end position="194"/>
    </location>
</feature>
<feature type="helix" evidence="8">
    <location>
        <begin position="195"/>
        <end position="200"/>
    </location>
</feature>
<feature type="strand" evidence="8">
    <location>
        <begin position="205"/>
        <end position="210"/>
    </location>
</feature>
<feature type="helix" evidence="8">
    <location>
        <begin position="211"/>
        <end position="216"/>
    </location>
</feature>
<feature type="helix" evidence="8">
    <location>
        <begin position="219"/>
        <end position="221"/>
    </location>
</feature>
<feature type="strand" evidence="8">
    <location>
        <begin position="225"/>
        <end position="228"/>
    </location>
</feature>
<feature type="strand" evidence="8">
    <location>
        <begin position="233"/>
        <end position="241"/>
    </location>
</feature>
<feature type="helix" evidence="8">
    <location>
        <begin position="242"/>
        <end position="247"/>
    </location>
</feature>
<feature type="helix" evidence="8">
    <location>
        <begin position="250"/>
        <end position="271"/>
    </location>
</feature>
<feature type="helix" evidence="8">
    <location>
        <begin position="274"/>
        <end position="285"/>
    </location>
</feature>
<feature type="strand" evidence="8">
    <location>
        <begin position="290"/>
        <end position="293"/>
    </location>
</feature>
<feature type="helix" evidence="8">
    <location>
        <begin position="296"/>
        <end position="303"/>
    </location>
</feature>
<feature type="helix" evidence="8">
    <location>
        <begin position="306"/>
        <end position="334"/>
    </location>
</feature>
<dbReference type="EMBL" id="AY061646">
    <property type="protein sequence ID" value="AAL29684.1"/>
    <property type="molecule type" value="Genomic_DNA"/>
</dbReference>
<dbReference type="EMBL" id="FN869568">
    <property type="protein sequence ID" value="CBV44158.1"/>
    <property type="molecule type" value="Genomic_DNA"/>
</dbReference>
<dbReference type="RefSeq" id="WP_013334028.1">
    <property type="nucleotide sequence ID" value="NC_014532.2"/>
</dbReference>
<dbReference type="PDB" id="2VPN">
    <property type="method" value="X-ray"/>
    <property type="resolution" value="1.55 A"/>
    <property type="chains" value="A/B=26-341"/>
</dbReference>
<dbReference type="PDB" id="2VPO">
    <property type="method" value="X-ray"/>
    <property type="resolution" value="1.80 A"/>
    <property type="chains" value="A/B=26-341"/>
</dbReference>
<dbReference type="PDB" id="3GYY">
    <property type="method" value="X-ray"/>
    <property type="resolution" value="2.20 A"/>
    <property type="chains" value="A/B/C/D=1-341"/>
</dbReference>
<dbReference type="PDBsum" id="2VPN"/>
<dbReference type="PDBsum" id="2VPO"/>
<dbReference type="PDBsum" id="3GYY"/>
<dbReference type="SMR" id="E1VBK1"/>
<dbReference type="STRING" id="768066.HELO_4274"/>
<dbReference type="TCDB" id="2.A.56.1.11">
    <property type="family name" value="the tripartite atp-independent periplasmic transporter (trap-t) family"/>
</dbReference>
<dbReference type="GeneID" id="91011724"/>
<dbReference type="KEGG" id="hel:HELO_4274"/>
<dbReference type="eggNOG" id="COG1638">
    <property type="taxonomic scope" value="Bacteria"/>
</dbReference>
<dbReference type="HOGENOM" id="CLU_036176_1_0_6"/>
<dbReference type="OrthoDB" id="8690069at2"/>
<dbReference type="EvolutionaryTrace" id="E1VBK1"/>
<dbReference type="Proteomes" id="UP000008707">
    <property type="component" value="Chromosome"/>
</dbReference>
<dbReference type="GO" id="GO:0042597">
    <property type="term" value="C:periplasmic space"/>
    <property type="evidence" value="ECO:0007669"/>
    <property type="project" value="UniProtKB-SubCell"/>
</dbReference>
<dbReference type="GO" id="GO:0055085">
    <property type="term" value="P:transmembrane transport"/>
    <property type="evidence" value="ECO:0007669"/>
    <property type="project" value="InterPro"/>
</dbReference>
<dbReference type="CDD" id="cd13668">
    <property type="entry name" value="PBP2_TRAP_UehA_TeaA"/>
    <property type="match status" value="1"/>
</dbReference>
<dbReference type="Gene3D" id="3.40.190.170">
    <property type="entry name" value="Bacterial extracellular solute-binding protein, family 7"/>
    <property type="match status" value="1"/>
</dbReference>
<dbReference type="InterPro" id="IPR018389">
    <property type="entry name" value="DctP_fam"/>
</dbReference>
<dbReference type="InterPro" id="IPR038404">
    <property type="entry name" value="TRAP_DctP_sf"/>
</dbReference>
<dbReference type="NCBIfam" id="NF037995">
    <property type="entry name" value="TRAP_S1"/>
    <property type="match status" value="1"/>
</dbReference>
<dbReference type="PANTHER" id="PTHR33376">
    <property type="match status" value="1"/>
</dbReference>
<dbReference type="PANTHER" id="PTHR33376:SF7">
    <property type="entry name" value="C4-DICARBOXYLATE-BINDING PROTEIN DCTB"/>
    <property type="match status" value="1"/>
</dbReference>
<dbReference type="Pfam" id="PF03480">
    <property type="entry name" value="DctP"/>
    <property type="match status" value="1"/>
</dbReference>
<reference key="1">
    <citation type="journal article" date="2002" name="J. Bacteriol.">
        <title>New type of osmoregulated solute transporter identified in halophilic members of the bacteria domain: TRAP transporter TeaABC mediates uptake of ectoine and hydroxyectoine in Halomonas elongata DSM 2581(T).</title>
        <authorList>
            <person name="Grammann K."/>
            <person name="Volke A."/>
            <person name="Kunte H.J."/>
        </authorList>
    </citation>
    <scope>NUCLEOTIDE SEQUENCE [GENOMIC DNA]</scope>
    <scope>FUNCTION</scope>
    <scope>SUBUNIT</scope>
    <scope>DISRUPTION PHENOTYPE</scope>
    <scope>GENE NAME</scope>
    <source>
        <strain>ATCC 33173 / DSM 2581 / NBRC 15536 / NCIMB 2198 / 1H9</strain>
    </source>
</reference>
<reference key="2">
    <citation type="journal article" date="2011" name="Environ. Microbiol.">
        <title>A blueprint of ectoine metabolism from the genome of the industrial producer Halomonas elongata DSM 2581(T).</title>
        <authorList>
            <person name="Schwibbert K."/>
            <person name="Marin-Sanguino A."/>
            <person name="Bagyan I."/>
            <person name="Heidrich G."/>
            <person name="Lentzen G."/>
            <person name="Seitz H."/>
            <person name="Rampp M."/>
            <person name="Schuster S.C."/>
            <person name="Klenk H.P."/>
            <person name="Pfeiffer F."/>
            <person name="Oesterhelt D."/>
            <person name="Kunte H.J."/>
        </authorList>
    </citation>
    <scope>NUCLEOTIDE SEQUENCE [LARGE SCALE GENOMIC DNA]</scope>
    <source>
        <strain>ATCC 33173 / DSM 2581 / NBRC 15536 / NCIMB 2198 / 1H9</strain>
    </source>
</reference>
<reference key="3">
    <citation type="journal article" date="2002" name="FEMS Microbiol. Lett.">
        <title>The substrate-binding protein TeaA of the osmoregulated ectoine transporter TeaABC from Halomonas elongata: purification and characterization of recombinant TeaA.</title>
        <authorList>
            <person name="Tetsch L."/>
            <person name="Kunte H.J."/>
        </authorList>
    </citation>
    <scope>PROTEIN SEQUENCE OF 26-35</scope>
    <scope>FUNCTION AS A SUBSTRATE-BINDING PROTEIN</scope>
    <scope>SUBCELLULAR LOCATION</scope>
    <source>
        <strain>ATCC 33173 / DSM 2581 / NBRC 15536 / NCIMB 2198 / 1H9</strain>
    </source>
</reference>
<reference key="4">
    <citation type="journal article" date="2008" name="Biochemistry">
        <title>1.55 A structure of the ectoine binding protein TeaA of the osmoregulated TRAP-transporter TeaABC from Halomonas elongata.</title>
        <authorList>
            <person name="Kuhlmann S.I."/>
            <person name="Terwisscha van Scheltinga A.C."/>
            <person name="Bienert R."/>
            <person name="Kunte H.J."/>
            <person name="Ziegler C."/>
        </authorList>
    </citation>
    <scope>X-RAY CRYSTALLOGRAPHY (1.55 ANGSTROMS) OF 26-341 IN COMPLEXES WITH ECTOINE AND HYDROXYECTOINE</scope>
    <scope>FUNCTION AS A SUBSTRATE-BINDING PROTEIN</scope>
    <scope>SUBUNIT</scope>
    <source>
        <strain>ATCC 33173 / DSM 2581 / NBRC 15536 / NCIMB 2198 / 1H9</strain>
    </source>
</reference>
<reference key="5">
    <citation type="journal article" date="2011" name="Proc. Natl. Acad. Sci. U.S.A.">
        <title>Evidence for an allosteric mechanism of substrate release from membrane-transporter accessory binding proteins.</title>
        <authorList>
            <person name="Marinelli F."/>
            <person name="Kuhlmann S.I."/>
            <person name="Grell E."/>
            <person name="Kunte H.J."/>
            <person name="Ziegler C."/>
            <person name="Faraldo-Gomez J.D."/>
        </authorList>
    </citation>
    <scope>X-RAY CRYSTALLOGRAPHY (2.20 ANGSTROMS)</scope>
    <scope>ALLOSTERIC REGULATION</scope>
    <scope>MUTAGENESIS OF GLY-273 AND 273-GLY--SER-275</scope>
    <source>
        <strain>ATCC 33173 / DSM 2581 / NBRC 15536 / NCIMB 2198 / 1H9</strain>
    </source>
</reference>
<accession>E1VBK1</accession>
<accession>Q8VPB3</accession>
<sequence>MKAYKLLTTASIGALMLGMSTAAYSDNWRYAHEEYEGDVQDVFAQAFKGYVEDNSDHTVQVYRFGELGESDDIMEQTQNGILQFVNQSPGFTGSLIPSAQIFFIPYLMPTDMDTVLEFFDESKAINEMFPKLYAEHGLELLKMYPEGEMVVTADEPITSPEDFDNKKIRTMTNPLLAETYKAFGATPTPLPWGEVYGGLQTGIIDGQENPIFWIESGGLYEVSPNLTFTSHGWFTTAMMANQDFYEGLSEEDQQLVQDAADAAYDHTIEHIKGLSEESLEKIKAASDEVTVTRLNDEQIQAFKERAPQVEEKFIEMTGEQGQELLDQFKADLKAVQSESEG</sequence>
<evidence type="ECO:0000269" key="1">
    <source>
    </source>
</evidence>
<evidence type="ECO:0000269" key="2">
    <source>
    </source>
</evidence>
<evidence type="ECO:0000269" key="3">
    <source>
    </source>
</evidence>
<evidence type="ECO:0000269" key="4">
    <source>
    </source>
</evidence>
<evidence type="ECO:0000305" key="5"/>
<evidence type="ECO:0000305" key="6">
    <source>
    </source>
</evidence>
<evidence type="ECO:0000305" key="7">
    <source>
    </source>
</evidence>
<evidence type="ECO:0007829" key="8">
    <source>
        <dbReference type="PDB" id="2VPN"/>
    </source>
</evidence>
<evidence type="ECO:0007829" key="9">
    <source>
        <dbReference type="PDB" id="3GYY"/>
    </source>
</evidence>